<feature type="chain" id="PRO_0000314784" description="Beta-galactoside alpha-2,6-sialyltransferase 2">
    <location>
        <begin position="1"/>
        <end position="495"/>
    </location>
</feature>
<feature type="topological domain" description="Cytoplasmic" evidence="3">
    <location>
        <begin position="1"/>
        <end position="10"/>
    </location>
</feature>
<feature type="transmembrane region" description="Helical; Signal-anchor for type II membrane protein" evidence="3">
    <location>
        <begin position="11"/>
        <end position="31"/>
    </location>
</feature>
<feature type="topological domain" description="Lumenal" evidence="3">
    <location>
        <begin position="32"/>
        <end position="495"/>
    </location>
</feature>
<feature type="region of interest" description="Disordered" evidence="4">
    <location>
        <begin position="63"/>
        <end position="90"/>
    </location>
</feature>
<feature type="region of interest" description="Disordered" evidence="4">
    <location>
        <begin position="107"/>
        <end position="165"/>
    </location>
</feature>
<feature type="compositionally biased region" description="Low complexity" evidence="4">
    <location>
        <begin position="134"/>
        <end position="143"/>
    </location>
</feature>
<feature type="compositionally biased region" description="Basic residues" evidence="4">
    <location>
        <begin position="144"/>
        <end position="153"/>
    </location>
</feature>
<feature type="glycosylation site" description="N-linked (GlcNAc...) asparagine" evidence="3">
    <location>
        <position position="279"/>
    </location>
</feature>
<feature type="glycosylation site" description="N-linked (GlcNAc...) asparagine" evidence="3">
    <location>
        <position position="309"/>
    </location>
</feature>
<feature type="disulfide bond" evidence="1">
    <location>
        <begin position="225"/>
        <end position="491"/>
    </location>
</feature>
<feature type="disulfide bond" evidence="1">
    <location>
        <begin position="268"/>
        <end position="420"/>
    </location>
</feature>
<feature type="disulfide bond" evidence="1">
    <location>
        <begin position="438"/>
        <end position="449"/>
    </location>
</feature>
<feature type="sequence conflict" description="In Ref. 2; ABC97371." evidence="5" ref="2">
    <original>R</original>
    <variation>Q</variation>
    <location>
        <position position="228"/>
    </location>
</feature>
<feature type="sequence conflict" description="In Ref. 2; ABC97371." evidence="5" ref="2">
    <original>S</original>
    <variation>P</variation>
    <location>
        <position position="288"/>
    </location>
</feature>
<feature type="sequence conflict" description="In Ref. 1; CAI29185." evidence="5" ref="1">
    <original>W</original>
    <variation>R</variation>
    <location>
        <position position="354"/>
    </location>
</feature>
<gene>
    <name type="primary">ST6GAL2</name>
</gene>
<evidence type="ECO:0000250" key="1"/>
<evidence type="ECO:0000250" key="2">
    <source>
        <dbReference type="UniProtKB" id="Q96JF0"/>
    </source>
</evidence>
<evidence type="ECO:0000255" key="3"/>
<evidence type="ECO:0000256" key="4">
    <source>
        <dbReference type="SAM" id="MobiDB-lite"/>
    </source>
</evidence>
<evidence type="ECO:0000305" key="5"/>
<keyword id="KW-1015">Disulfide bond</keyword>
<keyword id="KW-0325">Glycoprotein</keyword>
<keyword id="KW-0328">Glycosyltransferase</keyword>
<keyword id="KW-0333">Golgi apparatus</keyword>
<keyword id="KW-0472">Membrane</keyword>
<keyword id="KW-1185">Reference proteome</keyword>
<keyword id="KW-0735">Signal-anchor</keyword>
<keyword id="KW-0808">Transferase</keyword>
<keyword id="KW-0812">Transmembrane</keyword>
<keyword id="KW-1133">Transmembrane helix</keyword>
<dbReference type="EC" id="2.4.3.1" evidence="2"/>
<dbReference type="EMBL" id="AJ866780">
    <property type="protein sequence ID" value="CAI29185.1"/>
    <property type="molecule type" value="mRNA"/>
</dbReference>
<dbReference type="EMBL" id="DQ353938">
    <property type="protein sequence ID" value="ABC97371.1"/>
    <property type="molecule type" value="mRNA"/>
</dbReference>
<dbReference type="EMBL" id="BC140674">
    <property type="protein sequence ID" value="AAI40675.1"/>
    <property type="molecule type" value="mRNA"/>
</dbReference>
<dbReference type="RefSeq" id="NP_001008668.2">
    <property type="nucleotide sequence ID" value="NM_001008668.2"/>
</dbReference>
<dbReference type="RefSeq" id="XP_005212804.1">
    <property type="nucleotide sequence ID" value="XM_005212747.5"/>
</dbReference>
<dbReference type="SMR" id="A5D7T4"/>
<dbReference type="FunCoup" id="A5D7T4">
    <property type="interactions" value="368"/>
</dbReference>
<dbReference type="STRING" id="9913.ENSBTAP00000058792"/>
<dbReference type="CAZy" id="GT29">
    <property type="family name" value="Glycosyltransferase Family 29"/>
</dbReference>
<dbReference type="GlyCosmos" id="A5D7T4">
    <property type="glycosylation" value="2 sites, No reported glycans"/>
</dbReference>
<dbReference type="GlyGen" id="A5D7T4">
    <property type="glycosylation" value="2 sites"/>
</dbReference>
<dbReference type="PaxDb" id="9913-ENSBTAP00000000937"/>
<dbReference type="Ensembl" id="ENSBTAT00000000937.5">
    <property type="protein sequence ID" value="ENSBTAP00000000937.4"/>
    <property type="gene ID" value="ENSBTAG00000000703.6"/>
</dbReference>
<dbReference type="GeneID" id="493992"/>
<dbReference type="KEGG" id="bta:493992"/>
<dbReference type="CTD" id="84620"/>
<dbReference type="VEuPathDB" id="HostDB:ENSBTAG00000000703"/>
<dbReference type="VGNC" id="VGNC:35338">
    <property type="gene designation" value="ST6GAL2"/>
</dbReference>
<dbReference type="eggNOG" id="KOG2692">
    <property type="taxonomic scope" value="Eukaryota"/>
</dbReference>
<dbReference type="GeneTree" id="ENSGT00940000158714"/>
<dbReference type="HOGENOM" id="CLU_038334_1_0_1"/>
<dbReference type="InParanoid" id="A5D7T4"/>
<dbReference type="OMA" id="IMGAMHE"/>
<dbReference type="OrthoDB" id="10264956at2759"/>
<dbReference type="TreeFam" id="TF323961"/>
<dbReference type="BRENDA" id="2.4.99.1">
    <property type="organism ID" value="908"/>
</dbReference>
<dbReference type="Reactome" id="R-BTA-4085001">
    <property type="pathway name" value="Sialic acid metabolism"/>
</dbReference>
<dbReference type="Proteomes" id="UP000009136">
    <property type="component" value="Chromosome 11"/>
</dbReference>
<dbReference type="Bgee" id="ENSBTAG00000000703">
    <property type="expression patterns" value="Expressed in occipital lobe and 32 other cell types or tissues"/>
</dbReference>
<dbReference type="GO" id="GO:0005794">
    <property type="term" value="C:Golgi apparatus"/>
    <property type="evidence" value="ECO:0000318"/>
    <property type="project" value="GO_Central"/>
</dbReference>
<dbReference type="GO" id="GO:0032580">
    <property type="term" value="C:Golgi cisterna membrane"/>
    <property type="evidence" value="ECO:0007669"/>
    <property type="project" value="UniProtKB-SubCell"/>
</dbReference>
<dbReference type="GO" id="GO:0003835">
    <property type="term" value="F:beta-galactoside alpha-2,6-sialyltransferase activity"/>
    <property type="evidence" value="ECO:0000318"/>
    <property type="project" value="GO_Central"/>
</dbReference>
<dbReference type="GO" id="GO:0005975">
    <property type="term" value="P:carbohydrate metabolic process"/>
    <property type="evidence" value="ECO:0007669"/>
    <property type="project" value="InterPro"/>
</dbReference>
<dbReference type="GO" id="GO:0006486">
    <property type="term" value="P:protein glycosylation"/>
    <property type="evidence" value="ECO:0007669"/>
    <property type="project" value="InterPro"/>
</dbReference>
<dbReference type="GO" id="GO:0097503">
    <property type="term" value="P:sialylation"/>
    <property type="evidence" value="ECO:0000318"/>
    <property type="project" value="GO_Central"/>
</dbReference>
<dbReference type="FunFam" id="3.90.1480.20:FF:000010">
    <property type="entry name" value="ST6 beta-galactoside alpha-2,6-sialyltransferase 2"/>
    <property type="match status" value="1"/>
</dbReference>
<dbReference type="Gene3D" id="3.90.1480.20">
    <property type="entry name" value="Glycosyl transferase family 29"/>
    <property type="match status" value="1"/>
</dbReference>
<dbReference type="InterPro" id="IPR011330">
    <property type="entry name" value="Glyco_hydro/deAcase_b/a-brl"/>
</dbReference>
<dbReference type="InterPro" id="IPR001675">
    <property type="entry name" value="Glyco_trans_29"/>
</dbReference>
<dbReference type="InterPro" id="IPR038578">
    <property type="entry name" value="GT29-like_sf"/>
</dbReference>
<dbReference type="PANTHER" id="PTHR46059">
    <property type="entry name" value="BETA-GALACTOSIDE ALPHA-2,6-SIALYLTRANSFERASE"/>
    <property type="match status" value="1"/>
</dbReference>
<dbReference type="PANTHER" id="PTHR46059:SF3">
    <property type="entry name" value="BETA-GALACTOSIDE ALPHA-2,6-SIALYLTRANSFERASE 2"/>
    <property type="match status" value="1"/>
</dbReference>
<dbReference type="Pfam" id="PF00777">
    <property type="entry name" value="Glyco_transf_29"/>
    <property type="match status" value="1"/>
</dbReference>
<dbReference type="SUPFAM" id="SSF88713">
    <property type="entry name" value="Glycoside hydrolase/deacetylase"/>
    <property type="match status" value="1"/>
</dbReference>
<protein>
    <recommendedName>
        <fullName>Beta-galactoside alpha-2,6-sialyltransferase 2</fullName>
        <shortName>Alpha 2,6-ST 2</shortName>
        <ecNumber evidence="2">2.4.3.1</ecNumber>
    </recommendedName>
    <alternativeName>
        <fullName>CMP-N-acetylneuraminate-beta-galactosamide-alpha-2,6-sialyltransferase 2</fullName>
    </alternativeName>
    <alternativeName>
        <fullName>ST6Gal II</fullName>
        <shortName>ST6GalII</shortName>
    </alternativeName>
    <alternativeName>
        <fullName>Sialyltransferase 2</fullName>
    </alternativeName>
</protein>
<comment type="function">
    <text evidence="2">Transfers sialic acid from the donor of substrate CMP-sialic acid to galactose containing acceptor substrates. Has alpha-2,6-sialyltransferase activity toward oligosaccharides that have the Gal-beta-1,4-GlcNAc sequence at the non-reducing end of their carbohydrate groups, but it has weak or no activities toward glycoproteins and glycolipids.</text>
</comment>
<comment type="catalytic activity">
    <reaction evidence="2">
        <text>a beta-D-galactoside + CMP-N-acetyl-beta-neuraminate = an N-acetyl-alpha-neuraminyl-(2-&gt;6)-beta-D-galactosyl derivative + CMP + H(+)</text>
        <dbReference type="Rhea" id="RHEA:52104"/>
        <dbReference type="ChEBI" id="CHEBI:15378"/>
        <dbReference type="ChEBI" id="CHEBI:28034"/>
        <dbReference type="ChEBI" id="CHEBI:57812"/>
        <dbReference type="ChEBI" id="CHEBI:60377"/>
        <dbReference type="ChEBI" id="CHEBI:136398"/>
        <dbReference type="EC" id="2.4.3.1"/>
    </reaction>
</comment>
<comment type="subcellular location">
    <subcellularLocation>
        <location evidence="1">Golgi apparatus</location>
        <location evidence="1">Golgi stack membrane</location>
        <topology evidence="1">Single-pass type II membrane protein</topology>
    </subcellularLocation>
</comment>
<comment type="similarity">
    <text evidence="5">Belongs to the glycosyltransferase 29 family.</text>
</comment>
<organism>
    <name type="scientific">Bos taurus</name>
    <name type="common">Bovine</name>
    <dbReference type="NCBI Taxonomy" id="9913"/>
    <lineage>
        <taxon>Eukaryota</taxon>
        <taxon>Metazoa</taxon>
        <taxon>Chordata</taxon>
        <taxon>Craniata</taxon>
        <taxon>Vertebrata</taxon>
        <taxon>Euteleostomi</taxon>
        <taxon>Mammalia</taxon>
        <taxon>Eutheria</taxon>
        <taxon>Laurasiatheria</taxon>
        <taxon>Artiodactyla</taxon>
        <taxon>Ruminantia</taxon>
        <taxon>Pecora</taxon>
        <taxon>Bovidae</taxon>
        <taxon>Bovinae</taxon>
        <taxon>Bos</taxon>
    </lineage>
</organism>
<name>SIAT2_BOVIN</name>
<accession>A5D7T4</accession>
<accession>Q2I130</accession>
<accession>Q5QQ36</accession>
<reference key="1">
    <citation type="journal article" date="2005" name="Glycobiology">
        <title>The animal sialyltransferases and sialyltransferase-related genes: a phylogenetic approach.</title>
        <authorList>
            <person name="Harduin-Lepers A."/>
            <person name="Mollicone R."/>
            <person name="Delannoy P."/>
            <person name="Oriol R."/>
        </authorList>
    </citation>
    <scope>NUCLEOTIDE SEQUENCE [MRNA]</scope>
</reference>
<reference key="2">
    <citation type="submission" date="2006-01" db="EMBL/GenBank/DDBJ databases">
        <title>Characterization of the bovine ST6GalII gene product.</title>
        <authorList>
            <person name="Laporte B.J."/>
            <person name="Petit J.-M."/>
        </authorList>
    </citation>
    <scope>NUCLEOTIDE SEQUENCE [MRNA]</scope>
</reference>
<reference key="3">
    <citation type="submission" date="2007-04" db="EMBL/GenBank/DDBJ databases">
        <authorList>
            <consortium name="NIH - Mammalian Gene Collection (MGC) project"/>
        </authorList>
    </citation>
    <scope>NUCLEOTIDE SEQUENCE [LARGE SCALE MRNA]</scope>
    <source>
        <strain>Hereford</strain>
        <tissue>Fetal brain</tissue>
    </source>
</reference>
<proteinExistence type="evidence at transcript level"/>
<sequence>MKPHLKQWRQGMLCGVFAWGLFFVVIFLYFTDSSPAKPAPSSFSFLETRRLLPAQGRQRAIMGASEGLPEGADLRRGSPRGLPSGPLRTWAGDGFEREQEFLSVQTGRTSLSSFAPEDSAPGTSGRLFPGDPGPEGARPPRAAPGRRAKRGPRRQSLSARGEDGERLYSSMSRALLRRLWKGDASARMLHPRLQKAMGAYLRANKHGVRFRGRRASGRSRTELLCALRGRVQVRTLDGTEPPFSALGWRALVPPVPLSRLLPRRLRTCAVVTSAGAILNSSLGEEIDSHDAVLRFNSAPTRGYEKDVGNKTTVRIINSQILTNPSYHFMDSALYKDVILVAWDPAPYSANLNLWYKKPDYNLFTPYVQHRQRNPNQPFYILHPKFIWQLWDIIQENTKEKIQPNPPSSGFIGILLMMNLCGEVHVYEYVPSVRQTDLCHYHEPYHDAACTLGAYHPLLYEKLLVQRLNVGTHGDLHRKGKVVLPGLQAVRCPPGA</sequence>